<protein>
    <recommendedName>
        <fullName evidence="1">tRNA pseudouridine synthase B</fullName>
        <ecNumber evidence="1">5.4.99.25</ecNumber>
    </recommendedName>
    <alternativeName>
        <fullName evidence="1">tRNA pseudouridine(55) synthase</fullName>
        <shortName evidence="1">Psi55 synthase</shortName>
    </alternativeName>
    <alternativeName>
        <fullName evidence="1">tRNA pseudouridylate synthase</fullName>
    </alternativeName>
    <alternativeName>
        <fullName evidence="1">tRNA-uridine isomerase</fullName>
    </alternativeName>
</protein>
<dbReference type="EC" id="5.4.99.25" evidence="1"/>
<dbReference type="EMBL" id="CP000082">
    <property type="protein sequence ID" value="AAZ17945.1"/>
    <property type="molecule type" value="Genomic_DNA"/>
</dbReference>
<dbReference type="RefSeq" id="WP_011279384.1">
    <property type="nucleotide sequence ID" value="NC_007204.1"/>
</dbReference>
<dbReference type="SMR" id="Q4FVL3"/>
<dbReference type="STRING" id="259536.Psyc_0071"/>
<dbReference type="KEGG" id="par:Psyc_0071"/>
<dbReference type="eggNOG" id="COG0130">
    <property type="taxonomic scope" value="Bacteria"/>
</dbReference>
<dbReference type="HOGENOM" id="CLU_032087_0_3_6"/>
<dbReference type="OrthoDB" id="9802309at2"/>
<dbReference type="Proteomes" id="UP000000546">
    <property type="component" value="Chromosome"/>
</dbReference>
<dbReference type="GO" id="GO:0003723">
    <property type="term" value="F:RNA binding"/>
    <property type="evidence" value="ECO:0007669"/>
    <property type="project" value="InterPro"/>
</dbReference>
<dbReference type="GO" id="GO:0160148">
    <property type="term" value="F:tRNA pseudouridine(55) synthase activity"/>
    <property type="evidence" value="ECO:0007669"/>
    <property type="project" value="UniProtKB-EC"/>
</dbReference>
<dbReference type="GO" id="GO:1990481">
    <property type="term" value="P:mRNA pseudouridine synthesis"/>
    <property type="evidence" value="ECO:0007669"/>
    <property type="project" value="TreeGrafter"/>
</dbReference>
<dbReference type="GO" id="GO:0031119">
    <property type="term" value="P:tRNA pseudouridine synthesis"/>
    <property type="evidence" value="ECO:0007669"/>
    <property type="project" value="UniProtKB-UniRule"/>
</dbReference>
<dbReference type="CDD" id="cd02573">
    <property type="entry name" value="PseudoU_synth_EcTruB"/>
    <property type="match status" value="1"/>
</dbReference>
<dbReference type="FunFam" id="3.30.2350.10:FF:000011">
    <property type="entry name" value="tRNA pseudouridine synthase B"/>
    <property type="match status" value="1"/>
</dbReference>
<dbReference type="Gene3D" id="3.30.2350.10">
    <property type="entry name" value="Pseudouridine synthase"/>
    <property type="match status" value="1"/>
</dbReference>
<dbReference type="HAMAP" id="MF_01080">
    <property type="entry name" value="TruB_bact"/>
    <property type="match status" value="1"/>
</dbReference>
<dbReference type="InterPro" id="IPR020103">
    <property type="entry name" value="PsdUridine_synth_cat_dom_sf"/>
</dbReference>
<dbReference type="InterPro" id="IPR002501">
    <property type="entry name" value="PsdUridine_synth_N"/>
</dbReference>
<dbReference type="InterPro" id="IPR014780">
    <property type="entry name" value="tRNA_psdUridine_synth_TruB"/>
</dbReference>
<dbReference type="InterPro" id="IPR015240">
    <property type="entry name" value="tRNA_sdUridine_synth_fam1_C"/>
</dbReference>
<dbReference type="InterPro" id="IPR032819">
    <property type="entry name" value="TruB_C"/>
</dbReference>
<dbReference type="NCBIfam" id="TIGR00431">
    <property type="entry name" value="TruB"/>
    <property type="match status" value="1"/>
</dbReference>
<dbReference type="PANTHER" id="PTHR13767:SF2">
    <property type="entry name" value="PSEUDOURIDYLATE SYNTHASE TRUB1"/>
    <property type="match status" value="1"/>
</dbReference>
<dbReference type="PANTHER" id="PTHR13767">
    <property type="entry name" value="TRNA-PSEUDOURIDINE SYNTHASE"/>
    <property type="match status" value="1"/>
</dbReference>
<dbReference type="Pfam" id="PF09157">
    <property type="entry name" value="TruB-C_2"/>
    <property type="match status" value="1"/>
</dbReference>
<dbReference type="Pfam" id="PF16198">
    <property type="entry name" value="TruB_C_2"/>
    <property type="match status" value="1"/>
</dbReference>
<dbReference type="Pfam" id="PF01509">
    <property type="entry name" value="TruB_N"/>
    <property type="match status" value="1"/>
</dbReference>
<dbReference type="SUPFAM" id="SSF55120">
    <property type="entry name" value="Pseudouridine synthase"/>
    <property type="match status" value="1"/>
</dbReference>
<organism>
    <name type="scientific">Psychrobacter arcticus (strain DSM 17307 / VKM B-2377 / 273-4)</name>
    <dbReference type="NCBI Taxonomy" id="259536"/>
    <lineage>
        <taxon>Bacteria</taxon>
        <taxon>Pseudomonadati</taxon>
        <taxon>Pseudomonadota</taxon>
        <taxon>Gammaproteobacteria</taxon>
        <taxon>Moraxellales</taxon>
        <taxon>Moraxellaceae</taxon>
        <taxon>Psychrobacter</taxon>
    </lineage>
</organism>
<feature type="chain" id="PRO_0000229375" description="tRNA pseudouridine synthase B">
    <location>
        <begin position="1"/>
        <end position="380"/>
    </location>
</feature>
<feature type="region of interest" description="Disordered" evidence="2">
    <location>
        <begin position="309"/>
        <end position="339"/>
    </location>
</feature>
<feature type="compositionally biased region" description="Acidic residues" evidence="2">
    <location>
        <begin position="311"/>
        <end position="338"/>
    </location>
</feature>
<feature type="active site" description="Nucleophile" evidence="1">
    <location>
        <position position="63"/>
    </location>
</feature>
<accession>Q4FVL3</accession>
<gene>
    <name evidence="1" type="primary">truB</name>
    <name type="ordered locus">Psyc_0071</name>
</gene>
<sequence length="380" mass="41692">MSIASTQADKKSSNHPDKIKISGVILVDKPQGMTSQQVVSKVKYLFKSPNHDSKKAGHTGTLDPMATGLLPICLGEATKFSHYQLDADKSYQATILLGSQTDTGDADGQVTAEATISAFDDTMLDKIAQQFLGAQQQIPPMYSALKKDGKKLYEYARAGIEVDRPPRDIILKAIELKAIDEQQIQLTVTCSKGTYVRVLAEDIAKAIGTLGHLTALSRLQVGDFKIDETITLANLEALALEQRQTYLLPVDACIDINAELTLSSEQCERVQMGQRLNVIDQLTNDLQSYITSAIEQHLSTSNKNAAVNQNVEDDNDDNDDNDDNDDNDDNDDNDDNDDNAQQLLHEIPVDIRLIDEHGTFIGLGAVSLNGRLQPKKLIQL</sequence>
<proteinExistence type="inferred from homology"/>
<evidence type="ECO:0000255" key="1">
    <source>
        <dbReference type="HAMAP-Rule" id="MF_01080"/>
    </source>
</evidence>
<evidence type="ECO:0000256" key="2">
    <source>
        <dbReference type="SAM" id="MobiDB-lite"/>
    </source>
</evidence>
<comment type="function">
    <text evidence="1">Responsible for synthesis of pseudouridine from uracil-55 in the psi GC loop of transfer RNAs.</text>
</comment>
<comment type="catalytic activity">
    <reaction evidence="1">
        <text>uridine(55) in tRNA = pseudouridine(55) in tRNA</text>
        <dbReference type="Rhea" id="RHEA:42532"/>
        <dbReference type="Rhea" id="RHEA-COMP:10101"/>
        <dbReference type="Rhea" id="RHEA-COMP:10102"/>
        <dbReference type="ChEBI" id="CHEBI:65314"/>
        <dbReference type="ChEBI" id="CHEBI:65315"/>
        <dbReference type="EC" id="5.4.99.25"/>
    </reaction>
</comment>
<comment type="similarity">
    <text evidence="1">Belongs to the pseudouridine synthase TruB family. Type 1 subfamily.</text>
</comment>
<keyword id="KW-0413">Isomerase</keyword>
<keyword id="KW-1185">Reference proteome</keyword>
<keyword id="KW-0819">tRNA processing</keyword>
<name>TRUB_PSYA2</name>
<reference key="1">
    <citation type="journal article" date="2010" name="Appl. Environ. Microbiol.">
        <title>The genome sequence of Psychrobacter arcticus 273-4, a psychroactive Siberian permafrost bacterium, reveals mechanisms for adaptation to low-temperature growth.</title>
        <authorList>
            <person name="Ayala-del-Rio H.L."/>
            <person name="Chain P.S."/>
            <person name="Grzymski J.J."/>
            <person name="Ponder M.A."/>
            <person name="Ivanova N."/>
            <person name="Bergholz P.W."/>
            <person name="Di Bartolo G."/>
            <person name="Hauser L."/>
            <person name="Land M."/>
            <person name="Bakermans C."/>
            <person name="Rodrigues D."/>
            <person name="Klappenbach J."/>
            <person name="Zarka D."/>
            <person name="Larimer F."/>
            <person name="Richardson P."/>
            <person name="Murray A."/>
            <person name="Thomashow M."/>
            <person name="Tiedje J.M."/>
        </authorList>
    </citation>
    <scope>NUCLEOTIDE SEQUENCE [LARGE SCALE GENOMIC DNA]</scope>
    <source>
        <strain>DSM 17307 / VKM B-2377 / 273-4</strain>
    </source>
</reference>